<comment type="function">
    <text evidence="1">Binds directly to 23S rRNA. The L1 stalk is quite mobile in the ribosome, and is involved in E site tRNA release.</text>
</comment>
<comment type="function">
    <text evidence="1">Protein L1 is also a translational repressor protein, it controls the translation of the L11 operon by binding to its mRNA.</text>
</comment>
<comment type="subunit">
    <text evidence="1">Part of the 50S ribosomal subunit.</text>
</comment>
<comment type="similarity">
    <text evidence="1">Belongs to the universal ribosomal protein uL1 family.</text>
</comment>
<gene>
    <name evidence="1" type="primary">rplA</name>
    <name type="ordered locus">SAR0543</name>
</gene>
<name>RL1_STAAR</name>
<accession>Q6GJD0</accession>
<protein>
    <recommendedName>
        <fullName evidence="1">Large ribosomal subunit protein uL1</fullName>
    </recommendedName>
    <alternativeName>
        <fullName evidence="2">50S ribosomal protein L1</fullName>
    </alternativeName>
</protein>
<proteinExistence type="inferred from homology"/>
<keyword id="KW-0678">Repressor</keyword>
<keyword id="KW-0687">Ribonucleoprotein</keyword>
<keyword id="KW-0689">Ribosomal protein</keyword>
<keyword id="KW-0694">RNA-binding</keyword>
<keyword id="KW-0699">rRNA-binding</keyword>
<keyword id="KW-0810">Translation regulation</keyword>
<keyword id="KW-0820">tRNA-binding</keyword>
<evidence type="ECO:0000255" key="1">
    <source>
        <dbReference type="HAMAP-Rule" id="MF_01318"/>
    </source>
</evidence>
<evidence type="ECO:0000305" key="2"/>
<sequence length="229" mass="24546">MAKKGKKYQEAASKVDRTQHYSVEEAIKLAKETSIANFDASVEVAFRLGIDTRKNDQQIRGAVVLPNGTGKSQSVLVFAKGDKIAEAEAAGADYVGEAEYVQKIQQGWFDFDVVVATPDMMGEVGKLGRVLGPKGLMPNPKTGTVTMDVKKAVEEIKAGKVEYRAEKAGIVHASIGKVSFTDEQLIENFNTLQDVLAKAKPSSAKGTYFKSVAVTTTMGPGVKIDTASL</sequence>
<dbReference type="EMBL" id="BX571856">
    <property type="protein sequence ID" value="CAG39564.1"/>
    <property type="molecule type" value="Genomic_DNA"/>
</dbReference>
<dbReference type="RefSeq" id="WP_001074620.1">
    <property type="nucleotide sequence ID" value="NC_002952.2"/>
</dbReference>
<dbReference type="SMR" id="Q6GJD0"/>
<dbReference type="KEGG" id="sar:SAR0543"/>
<dbReference type="HOGENOM" id="CLU_062853_0_0_9"/>
<dbReference type="Proteomes" id="UP000000596">
    <property type="component" value="Chromosome"/>
</dbReference>
<dbReference type="GO" id="GO:0015934">
    <property type="term" value="C:large ribosomal subunit"/>
    <property type="evidence" value="ECO:0007669"/>
    <property type="project" value="InterPro"/>
</dbReference>
<dbReference type="GO" id="GO:0019843">
    <property type="term" value="F:rRNA binding"/>
    <property type="evidence" value="ECO:0007669"/>
    <property type="project" value="UniProtKB-UniRule"/>
</dbReference>
<dbReference type="GO" id="GO:0003735">
    <property type="term" value="F:structural constituent of ribosome"/>
    <property type="evidence" value="ECO:0007669"/>
    <property type="project" value="InterPro"/>
</dbReference>
<dbReference type="GO" id="GO:0000049">
    <property type="term" value="F:tRNA binding"/>
    <property type="evidence" value="ECO:0007669"/>
    <property type="project" value="UniProtKB-KW"/>
</dbReference>
<dbReference type="GO" id="GO:0006417">
    <property type="term" value="P:regulation of translation"/>
    <property type="evidence" value="ECO:0007669"/>
    <property type="project" value="UniProtKB-KW"/>
</dbReference>
<dbReference type="GO" id="GO:0006412">
    <property type="term" value="P:translation"/>
    <property type="evidence" value="ECO:0007669"/>
    <property type="project" value="UniProtKB-UniRule"/>
</dbReference>
<dbReference type="CDD" id="cd00403">
    <property type="entry name" value="Ribosomal_L1"/>
    <property type="match status" value="1"/>
</dbReference>
<dbReference type="FunFam" id="3.40.50.790:FF:000001">
    <property type="entry name" value="50S ribosomal protein L1"/>
    <property type="match status" value="1"/>
</dbReference>
<dbReference type="Gene3D" id="3.30.190.20">
    <property type="match status" value="1"/>
</dbReference>
<dbReference type="Gene3D" id="3.40.50.790">
    <property type="match status" value="1"/>
</dbReference>
<dbReference type="HAMAP" id="MF_01318_B">
    <property type="entry name" value="Ribosomal_uL1_B"/>
    <property type="match status" value="1"/>
</dbReference>
<dbReference type="InterPro" id="IPR005878">
    <property type="entry name" value="Ribosom_uL1_bac-type"/>
</dbReference>
<dbReference type="InterPro" id="IPR002143">
    <property type="entry name" value="Ribosomal_uL1"/>
</dbReference>
<dbReference type="InterPro" id="IPR023674">
    <property type="entry name" value="Ribosomal_uL1-like"/>
</dbReference>
<dbReference type="InterPro" id="IPR028364">
    <property type="entry name" value="Ribosomal_uL1/biogenesis"/>
</dbReference>
<dbReference type="InterPro" id="IPR016095">
    <property type="entry name" value="Ribosomal_uL1_3-a/b-sand"/>
</dbReference>
<dbReference type="InterPro" id="IPR023673">
    <property type="entry name" value="Ribosomal_uL1_CS"/>
</dbReference>
<dbReference type="NCBIfam" id="TIGR01169">
    <property type="entry name" value="rplA_bact"/>
    <property type="match status" value="1"/>
</dbReference>
<dbReference type="PANTHER" id="PTHR36427">
    <property type="entry name" value="54S RIBOSOMAL PROTEIN L1, MITOCHONDRIAL"/>
    <property type="match status" value="1"/>
</dbReference>
<dbReference type="PANTHER" id="PTHR36427:SF3">
    <property type="entry name" value="LARGE RIBOSOMAL SUBUNIT PROTEIN UL1M"/>
    <property type="match status" value="1"/>
</dbReference>
<dbReference type="Pfam" id="PF00687">
    <property type="entry name" value="Ribosomal_L1"/>
    <property type="match status" value="1"/>
</dbReference>
<dbReference type="PIRSF" id="PIRSF002155">
    <property type="entry name" value="Ribosomal_L1"/>
    <property type="match status" value="1"/>
</dbReference>
<dbReference type="SUPFAM" id="SSF56808">
    <property type="entry name" value="Ribosomal protein L1"/>
    <property type="match status" value="1"/>
</dbReference>
<dbReference type="PROSITE" id="PS01199">
    <property type="entry name" value="RIBOSOMAL_L1"/>
    <property type="match status" value="1"/>
</dbReference>
<feature type="chain" id="PRO_0000125733" description="Large ribosomal subunit protein uL1">
    <location>
        <begin position="1"/>
        <end position="229"/>
    </location>
</feature>
<reference key="1">
    <citation type="journal article" date="2004" name="Proc. Natl. Acad. Sci. U.S.A.">
        <title>Complete genomes of two clinical Staphylococcus aureus strains: evidence for the rapid evolution of virulence and drug resistance.</title>
        <authorList>
            <person name="Holden M.T.G."/>
            <person name="Feil E.J."/>
            <person name="Lindsay J.A."/>
            <person name="Peacock S.J."/>
            <person name="Day N.P.J."/>
            <person name="Enright M.C."/>
            <person name="Foster T.J."/>
            <person name="Moore C.E."/>
            <person name="Hurst L."/>
            <person name="Atkin R."/>
            <person name="Barron A."/>
            <person name="Bason N."/>
            <person name="Bentley S.D."/>
            <person name="Chillingworth C."/>
            <person name="Chillingworth T."/>
            <person name="Churcher C."/>
            <person name="Clark L."/>
            <person name="Corton C."/>
            <person name="Cronin A."/>
            <person name="Doggett J."/>
            <person name="Dowd L."/>
            <person name="Feltwell T."/>
            <person name="Hance Z."/>
            <person name="Harris B."/>
            <person name="Hauser H."/>
            <person name="Holroyd S."/>
            <person name="Jagels K."/>
            <person name="James K.D."/>
            <person name="Lennard N."/>
            <person name="Line A."/>
            <person name="Mayes R."/>
            <person name="Moule S."/>
            <person name="Mungall K."/>
            <person name="Ormond D."/>
            <person name="Quail M.A."/>
            <person name="Rabbinowitsch E."/>
            <person name="Rutherford K.M."/>
            <person name="Sanders M."/>
            <person name="Sharp S."/>
            <person name="Simmonds M."/>
            <person name="Stevens K."/>
            <person name="Whitehead S."/>
            <person name="Barrell B.G."/>
            <person name="Spratt B.G."/>
            <person name="Parkhill J."/>
        </authorList>
    </citation>
    <scope>NUCLEOTIDE SEQUENCE [LARGE SCALE GENOMIC DNA]</scope>
    <source>
        <strain>MRSA252</strain>
    </source>
</reference>
<organism>
    <name type="scientific">Staphylococcus aureus (strain MRSA252)</name>
    <dbReference type="NCBI Taxonomy" id="282458"/>
    <lineage>
        <taxon>Bacteria</taxon>
        <taxon>Bacillati</taxon>
        <taxon>Bacillota</taxon>
        <taxon>Bacilli</taxon>
        <taxon>Bacillales</taxon>
        <taxon>Staphylococcaceae</taxon>
        <taxon>Staphylococcus</taxon>
    </lineage>
</organism>